<accession>Q0V881</accession>
<organism>
    <name type="scientific">Bos taurus</name>
    <name type="common">Bovine</name>
    <dbReference type="NCBI Taxonomy" id="9913"/>
    <lineage>
        <taxon>Eukaryota</taxon>
        <taxon>Metazoa</taxon>
        <taxon>Chordata</taxon>
        <taxon>Craniata</taxon>
        <taxon>Vertebrata</taxon>
        <taxon>Euteleostomi</taxon>
        <taxon>Mammalia</taxon>
        <taxon>Eutheria</taxon>
        <taxon>Laurasiatheria</taxon>
        <taxon>Artiodactyla</taxon>
        <taxon>Ruminantia</taxon>
        <taxon>Pecora</taxon>
        <taxon>Bovidae</taxon>
        <taxon>Bovinae</taxon>
        <taxon>Bos</taxon>
    </lineage>
</organism>
<keyword id="KW-1003">Cell membrane</keyword>
<keyword id="KW-1015">Disulfide bond</keyword>
<keyword id="KW-0325">Glycoprotein</keyword>
<keyword id="KW-0393">Immunoglobulin domain</keyword>
<keyword id="KW-0472">Membrane</keyword>
<keyword id="KW-0597">Phosphoprotein</keyword>
<keyword id="KW-1185">Reference proteome</keyword>
<keyword id="KW-0732">Signal</keyword>
<keyword id="KW-0812">Transmembrane</keyword>
<keyword id="KW-1133">Transmembrane helix</keyword>
<feature type="signal peptide" evidence="3">
    <location>
        <begin position="1"/>
        <end position="19"/>
    </location>
</feature>
<feature type="chain" id="PRO_0000318922" description="Lymphocyte antigen 6 complex locus protein G6f">
    <location>
        <begin position="20"/>
        <end position="299"/>
    </location>
</feature>
<feature type="topological domain" description="Extracellular" evidence="3">
    <location>
        <begin position="20"/>
        <end position="237"/>
    </location>
</feature>
<feature type="transmembrane region" description="Helical" evidence="3">
    <location>
        <begin position="238"/>
        <end position="258"/>
    </location>
</feature>
<feature type="topological domain" description="Cytoplasmic" evidence="3">
    <location>
        <begin position="259"/>
        <end position="299"/>
    </location>
</feature>
<feature type="domain" description="Ig-like V-type">
    <location>
        <begin position="20"/>
        <end position="124"/>
    </location>
</feature>
<feature type="modified residue" description="Phosphotyrosine" evidence="2">
    <location>
        <position position="283"/>
    </location>
</feature>
<feature type="glycosylation site" description="N-linked (GlcNAc...) asparagine" evidence="3">
    <location>
        <position position="90"/>
    </location>
</feature>
<feature type="disulfide bond" evidence="4">
    <location>
        <begin position="37"/>
        <end position="108"/>
    </location>
</feature>
<sequence>MAVLFLLLLFLCGLPQAETDSIQAIYVVLGEALELPCPSPPALNGDEFLSWFHSPAAGSSTALVAHVQVARPSRDPGKPRRESRLTLLGNYSLWLEGSKAGDAGRYWCALLGQRYRYQNWRVYDVSVLRGSQFSARAADGSSCSVLLCSVVPARSLDSVTWQEGKGPVKGDVQSFWGDGATLLLMCPGEGLPEPRAHKPGIIRCLVPQNKGISFSLAASTDASPALCAPSADWDVAWILTLLLTVGQGFTIVVLGVMLWRQRAQGAQHRNASFPQFKPEIQVYENIHLAHLSPPAPKTR</sequence>
<protein>
    <recommendedName>
        <fullName>Lymphocyte antigen 6 complex locus protein G6f</fullName>
    </recommendedName>
</protein>
<name>LY66F_BOVIN</name>
<proteinExistence type="evidence at transcript level"/>
<dbReference type="EMBL" id="BT026338">
    <property type="protein sequence ID" value="ABG81494.1"/>
    <property type="molecule type" value="mRNA"/>
</dbReference>
<dbReference type="RefSeq" id="NP_001069662.1">
    <property type="nucleotide sequence ID" value="NM_001076194.1"/>
</dbReference>
<dbReference type="FunCoup" id="Q0V881">
    <property type="interactions" value="47"/>
</dbReference>
<dbReference type="STRING" id="9913.ENSBTAP00000074491"/>
<dbReference type="GlyCosmos" id="Q0V881">
    <property type="glycosylation" value="1 site, No reported glycans"/>
</dbReference>
<dbReference type="GlyGen" id="Q0V881">
    <property type="glycosylation" value="1 site"/>
</dbReference>
<dbReference type="PaxDb" id="9913-ENSBTAP00000000757"/>
<dbReference type="GeneID" id="539920"/>
<dbReference type="KEGG" id="bta:539920"/>
<dbReference type="CTD" id="259215"/>
<dbReference type="eggNOG" id="ENOG502SNF5">
    <property type="taxonomic scope" value="Eukaryota"/>
</dbReference>
<dbReference type="InParanoid" id="Q0V881"/>
<dbReference type="OrthoDB" id="9937043at2759"/>
<dbReference type="Proteomes" id="UP000009136">
    <property type="component" value="Unplaced"/>
</dbReference>
<dbReference type="GO" id="GO:0005886">
    <property type="term" value="C:plasma membrane"/>
    <property type="evidence" value="ECO:0007669"/>
    <property type="project" value="UniProtKB-SubCell"/>
</dbReference>
<dbReference type="Gene3D" id="2.60.40.10">
    <property type="entry name" value="Immunoglobulins"/>
    <property type="match status" value="1"/>
</dbReference>
<dbReference type="InterPro" id="IPR007110">
    <property type="entry name" value="Ig-like_dom"/>
</dbReference>
<dbReference type="InterPro" id="IPR036179">
    <property type="entry name" value="Ig-like_dom_sf"/>
</dbReference>
<dbReference type="InterPro" id="IPR013783">
    <property type="entry name" value="Ig-like_fold"/>
</dbReference>
<dbReference type="InterPro" id="IPR003599">
    <property type="entry name" value="Ig_sub"/>
</dbReference>
<dbReference type="InterPro" id="IPR013106">
    <property type="entry name" value="Ig_V-set"/>
</dbReference>
<dbReference type="InterPro" id="IPR026524">
    <property type="entry name" value="LY6G6d/LY6G6f"/>
</dbReference>
<dbReference type="PANTHER" id="PTHR32286">
    <property type="entry name" value="LYMPHOCYTE ANTIGEN 6 COMPLEX LOCUS PROTEIN G6F"/>
    <property type="match status" value="1"/>
</dbReference>
<dbReference type="PANTHER" id="PTHR32286:SF10">
    <property type="entry name" value="LYMPHOCYTE ANTIGEN 6 COMPLEX LOCUS PROTEIN G6F"/>
    <property type="match status" value="1"/>
</dbReference>
<dbReference type="Pfam" id="PF07686">
    <property type="entry name" value="V-set"/>
    <property type="match status" value="1"/>
</dbReference>
<dbReference type="SMART" id="SM00409">
    <property type="entry name" value="IG"/>
    <property type="match status" value="1"/>
</dbReference>
<dbReference type="SUPFAM" id="SSF48726">
    <property type="entry name" value="Immunoglobulin"/>
    <property type="match status" value="1"/>
</dbReference>
<dbReference type="PROSITE" id="PS50835">
    <property type="entry name" value="IG_LIKE"/>
    <property type="match status" value="1"/>
</dbReference>
<evidence type="ECO:0000250" key="1"/>
<evidence type="ECO:0000250" key="2">
    <source>
        <dbReference type="UniProtKB" id="Q5SQ64"/>
    </source>
</evidence>
<evidence type="ECO:0000255" key="3"/>
<evidence type="ECO:0000255" key="4">
    <source>
        <dbReference type="PROSITE-ProRule" id="PRU00114"/>
    </source>
</evidence>
<reference key="1">
    <citation type="journal article" date="2005" name="BMC Genomics">
        <title>Characterization of 954 bovine full-CDS cDNA sequences.</title>
        <authorList>
            <person name="Harhay G.P."/>
            <person name="Sonstegard T.S."/>
            <person name="Keele J.W."/>
            <person name="Heaton M.P."/>
            <person name="Clawson M.L."/>
            <person name="Snelling W.M."/>
            <person name="Wiedmann R.T."/>
            <person name="Van Tassell C.P."/>
            <person name="Smith T.P.L."/>
        </authorList>
    </citation>
    <scope>NUCLEOTIDE SEQUENCE [LARGE SCALE MRNA]</scope>
    <source>
        <tissue>Embryo</tissue>
    </source>
</reference>
<comment type="function">
    <text evidence="1">May play a role in the downstream signal transduction pathways involving GRB2 and GRB7.</text>
</comment>
<comment type="subunit">
    <text evidence="1">Homodimer; disulfide-linked. Interacts with GRB2 and GRB7 in a phosphorylation-dependent manner (By similarity).</text>
</comment>
<comment type="subcellular location">
    <subcellularLocation>
        <location evidence="1">Cell membrane</location>
        <topology evidence="1">Single-pass type I membrane protein</topology>
    </subcellularLocation>
</comment>
<comment type="PTM">
    <text evidence="1">N-glycosylated.</text>
</comment>
<gene>
    <name type="primary">LY6G6F</name>
    <name type="synonym">G6F</name>
</gene>